<comment type="similarity">
    <text evidence="1">Belongs to the bacterial ribosomal protein bL35 family.</text>
</comment>
<proteinExistence type="inferred from homology"/>
<accession>Q8E4E8</accession>
<keyword id="KW-0687">Ribonucleoprotein</keyword>
<keyword id="KW-0689">Ribosomal protein</keyword>
<feature type="chain" id="PRO_0000177427" description="Large ribosomal subunit protein bL35">
    <location>
        <begin position="1"/>
        <end position="66"/>
    </location>
</feature>
<feature type="region of interest" description="Disordered" evidence="2">
    <location>
        <begin position="1"/>
        <end position="21"/>
    </location>
</feature>
<feature type="compositionally biased region" description="Basic residues" evidence="2">
    <location>
        <begin position="1"/>
        <end position="16"/>
    </location>
</feature>
<sequence length="66" mass="7768">MPKQKTHRASAKRFKRTGSGGLKRFRAFTSHRFHGKTKKQRRHLRKATMVSSGDFKRIKAMLTRLK</sequence>
<dbReference type="EMBL" id="AL766850">
    <property type="protein sequence ID" value="CAD47112.1"/>
    <property type="molecule type" value="Genomic_DNA"/>
</dbReference>
<dbReference type="RefSeq" id="WP_001125940.1">
    <property type="nucleotide sequence ID" value="NC_004368.1"/>
</dbReference>
<dbReference type="SMR" id="Q8E4E8"/>
<dbReference type="KEGG" id="san:rpmI"/>
<dbReference type="eggNOG" id="COG0291">
    <property type="taxonomic scope" value="Bacteria"/>
</dbReference>
<dbReference type="HOGENOM" id="CLU_169643_3_0_9"/>
<dbReference type="Proteomes" id="UP000000823">
    <property type="component" value="Chromosome"/>
</dbReference>
<dbReference type="GO" id="GO:0022625">
    <property type="term" value="C:cytosolic large ribosomal subunit"/>
    <property type="evidence" value="ECO:0007669"/>
    <property type="project" value="TreeGrafter"/>
</dbReference>
<dbReference type="GO" id="GO:0003735">
    <property type="term" value="F:structural constituent of ribosome"/>
    <property type="evidence" value="ECO:0007669"/>
    <property type="project" value="InterPro"/>
</dbReference>
<dbReference type="GO" id="GO:0006412">
    <property type="term" value="P:translation"/>
    <property type="evidence" value="ECO:0007669"/>
    <property type="project" value="UniProtKB-UniRule"/>
</dbReference>
<dbReference type="FunFam" id="4.10.410.60:FF:000001">
    <property type="entry name" value="50S ribosomal protein L35"/>
    <property type="match status" value="1"/>
</dbReference>
<dbReference type="Gene3D" id="4.10.410.60">
    <property type="match status" value="1"/>
</dbReference>
<dbReference type="HAMAP" id="MF_00514">
    <property type="entry name" value="Ribosomal_bL35"/>
    <property type="match status" value="1"/>
</dbReference>
<dbReference type="InterPro" id="IPR001706">
    <property type="entry name" value="Ribosomal_bL35"/>
</dbReference>
<dbReference type="InterPro" id="IPR021137">
    <property type="entry name" value="Ribosomal_bL35-like"/>
</dbReference>
<dbReference type="InterPro" id="IPR018265">
    <property type="entry name" value="Ribosomal_bL35_CS"/>
</dbReference>
<dbReference type="InterPro" id="IPR037229">
    <property type="entry name" value="Ribosomal_bL35_sf"/>
</dbReference>
<dbReference type="NCBIfam" id="TIGR00001">
    <property type="entry name" value="rpmI_bact"/>
    <property type="match status" value="1"/>
</dbReference>
<dbReference type="PANTHER" id="PTHR33343">
    <property type="entry name" value="54S RIBOSOMAL PROTEIN BL35M"/>
    <property type="match status" value="1"/>
</dbReference>
<dbReference type="PANTHER" id="PTHR33343:SF1">
    <property type="entry name" value="LARGE RIBOSOMAL SUBUNIT PROTEIN BL35M"/>
    <property type="match status" value="1"/>
</dbReference>
<dbReference type="Pfam" id="PF01632">
    <property type="entry name" value="Ribosomal_L35p"/>
    <property type="match status" value="1"/>
</dbReference>
<dbReference type="PRINTS" id="PR00064">
    <property type="entry name" value="RIBOSOMALL35"/>
</dbReference>
<dbReference type="SUPFAM" id="SSF143034">
    <property type="entry name" value="L35p-like"/>
    <property type="match status" value="1"/>
</dbReference>
<dbReference type="PROSITE" id="PS00936">
    <property type="entry name" value="RIBOSOMAL_L35"/>
    <property type="match status" value="1"/>
</dbReference>
<organism>
    <name type="scientific">Streptococcus agalactiae serotype III (strain NEM316)</name>
    <dbReference type="NCBI Taxonomy" id="211110"/>
    <lineage>
        <taxon>Bacteria</taxon>
        <taxon>Bacillati</taxon>
        <taxon>Bacillota</taxon>
        <taxon>Bacilli</taxon>
        <taxon>Lactobacillales</taxon>
        <taxon>Streptococcaceae</taxon>
        <taxon>Streptococcus</taxon>
    </lineage>
</organism>
<reference key="1">
    <citation type="journal article" date="2002" name="Mol. Microbiol.">
        <title>Genome sequence of Streptococcus agalactiae, a pathogen causing invasive neonatal disease.</title>
        <authorList>
            <person name="Glaser P."/>
            <person name="Rusniok C."/>
            <person name="Buchrieser C."/>
            <person name="Chevalier F."/>
            <person name="Frangeul L."/>
            <person name="Msadek T."/>
            <person name="Zouine M."/>
            <person name="Couve E."/>
            <person name="Lalioui L."/>
            <person name="Poyart C."/>
            <person name="Trieu-Cuot P."/>
            <person name="Kunst F."/>
        </authorList>
    </citation>
    <scope>NUCLEOTIDE SEQUENCE [LARGE SCALE GENOMIC DNA]</scope>
    <source>
        <strain>NEM316</strain>
    </source>
</reference>
<evidence type="ECO:0000255" key="1">
    <source>
        <dbReference type="HAMAP-Rule" id="MF_00514"/>
    </source>
</evidence>
<evidence type="ECO:0000256" key="2">
    <source>
        <dbReference type="SAM" id="MobiDB-lite"/>
    </source>
</evidence>
<evidence type="ECO:0000305" key="3"/>
<gene>
    <name evidence="1" type="primary">rpmI</name>
    <name type="ordered locus">gbs1453</name>
</gene>
<name>RL35_STRA3</name>
<protein>
    <recommendedName>
        <fullName evidence="1">Large ribosomal subunit protein bL35</fullName>
    </recommendedName>
    <alternativeName>
        <fullName evidence="3">50S ribosomal protein L35</fullName>
    </alternativeName>
</protein>